<comment type="function">
    <text evidence="2">Kinesin family member that is involved in spindle formation and the movements of chromosomes during mitosis and meiosis. Binds to microtubules and to DNA.</text>
</comment>
<comment type="subcellular location">
    <subcellularLocation>
        <location evidence="2">Nucleus</location>
    </subcellularLocation>
    <subcellularLocation>
        <location evidence="6">Cytoplasm</location>
        <location evidence="6">Cytoskeleton</location>
    </subcellularLocation>
</comment>
<comment type="PTM">
    <text evidence="2">Ubiquitinated, leading to its subsequent proteasomal degradation.</text>
</comment>
<comment type="similarity">
    <text evidence="4">Belongs to the TRAFAC class myosin-kinesin ATPase superfamily. Kinesin family.</text>
</comment>
<dbReference type="EMBL" id="BC063896">
    <property type="protein sequence ID" value="AAH63896.1"/>
    <property type="molecule type" value="mRNA"/>
</dbReference>
<dbReference type="RefSeq" id="NP_989245.1">
    <property type="nucleotide sequence ID" value="NM_203914.1"/>
</dbReference>
<dbReference type="SMR" id="Q6P3R1"/>
<dbReference type="FunCoup" id="Q6P3R1">
    <property type="interactions" value="1281"/>
</dbReference>
<dbReference type="PaxDb" id="8364-ENSXETP00000010161"/>
<dbReference type="DNASU" id="394855"/>
<dbReference type="GeneID" id="394855"/>
<dbReference type="KEGG" id="xtr:394855"/>
<dbReference type="AGR" id="Xenbase:XB-GENE-979888"/>
<dbReference type="CTD" id="3835"/>
<dbReference type="Xenbase" id="XB-GENE-979888">
    <property type="gene designation" value="kif22"/>
</dbReference>
<dbReference type="eggNOG" id="KOG0242">
    <property type="taxonomic scope" value="Eukaryota"/>
</dbReference>
<dbReference type="InParanoid" id="Q6P3R1"/>
<dbReference type="OrthoDB" id="3176171at2759"/>
<dbReference type="Reactome" id="R-XTR-6811434">
    <property type="pathway name" value="COPI-dependent Golgi-to-ER retrograde traffic"/>
</dbReference>
<dbReference type="Reactome" id="R-XTR-983189">
    <property type="pathway name" value="Kinesins"/>
</dbReference>
<dbReference type="Proteomes" id="UP000008143">
    <property type="component" value="Chromosome 9"/>
</dbReference>
<dbReference type="GO" id="GO:0005737">
    <property type="term" value="C:cytoplasm"/>
    <property type="evidence" value="ECO:0007669"/>
    <property type="project" value="UniProtKB-KW"/>
</dbReference>
<dbReference type="GO" id="GO:0005874">
    <property type="term" value="C:microtubule"/>
    <property type="evidence" value="ECO:0007669"/>
    <property type="project" value="UniProtKB-KW"/>
</dbReference>
<dbReference type="GO" id="GO:0005634">
    <property type="term" value="C:nucleus"/>
    <property type="evidence" value="ECO:0007669"/>
    <property type="project" value="UniProtKB-SubCell"/>
</dbReference>
<dbReference type="GO" id="GO:0005524">
    <property type="term" value="F:ATP binding"/>
    <property type="evidence" value="ECO:0007669"/>
    <property type="project" value="UniProtKB-KW"/>
</dbReference>
<dbReference type="GO" id="GO:0003677">
    <property type="term" value="F:DNA binding"/>
    <property type="evidence" value="ECO:0007669"/>
    <property type="project" value="UniProtKB-KW"/>
</dbReference>
<dbReference type="GO" id="GO:0008017">
    <property type="term" value="F:microtubule binding"/>
    <property type="evidence" value="ECO:0007669"/>
    <property type="project" value="InterPro"/>
</dbReference>
<dbReference type="GO" id="GO:0003777">
    <property type="term" value="F:microtubule motor activity"/>
    <property type="evidence" value="ECO:0007669"/>
    <property type="project" value="InterPro"/>
</dbReference>
<dbReference type="GO" id="GO:0007018">
    <property type="term" value="P:microtubule-based movement"/>
    <property type="evidence" value="ECO:0007669"/>
    <property type="project" value="InterPro"/>
</dbReference>
<dbReference type="CDD" id="cd01376">
    <property type="entry name" value="KISc_KID_like"/>
    <property type="match status" value="1"/>
</dbReference>
<dbReference type="FunFam" id="1.10.150.280:FF:000002">
    <property type="entry name" value="Kinesin-like protein"/>
    <property type="match status" value="1"/>
</dbReference>
<dbReference type="FunFam" id="3.40.850.10:FF:000043">
    <property type="entry name" value="Kinesin-like protein"/>
    <property type="match status" value="1"/>
</dbReference>
<dbReference type="Gene3D" id="1.10.150.280">
    <property type="entry name" value="AF1531-like domain"/>
    <property type="match status" value="1"/>
</dbReference>
<dbReference type="Gene3D" id="3.40.850.10">
    <property type="entry name" value="Kinesin motor domain"/>
    <property type="match status" value="1"/>
</dbReference>
<dbReference type="InterPro" id="IPR027640">
    <property type="entry name" value="Kinesin-like_fam"/>
</dbReference>
<dbReference type="InterPro" id="IPR019821">
    <property type="entry name" value="Kinesin_motor_CS"/>
</dbReference>
<dbReference type="InterPro" id="IPR001752">
    <property type="entry name" value="Kinesin_motor_dom"/>
</dbReference>
<dbReference type="InterPro" id="IPR036961">
    <property type="entry name" value="Kinesin_motor_dom_sf"/>
</dbReference>
<dbReference type="InterPro" id="IPR027417">
    <property type="entry name" value="P-loop_NTPase"/>
</dbReference>
<dbReference type="InterPro" id="IPR010994">
    <property type="entry name" value="RuvA_2-like"/>
</dbReference>
<dbReference type="PANTHER" id="PTHR47969">
    <property type="entry name" value="CHROMOSOME-ASSOCIATED KINESIN KIF4A-RELATED"/>
    <property type="match status" value="1"/>
</dbReference>
<dbReference type="PANTHER" id="PTHR47969:SF9">
    <property type="entry name" value="KINESIN-LIKE PROTEIN"/>
    <property type="match status" value="1"/>
</dbReference>
<dbReference type="Pfam" id="PF12836">
    <property type="entry name" value="HHH_3"/>
    <property type="match status" value="1"/>
</dbReference>
<dbReference type="Pfam" id="PF00225">
    <property type="entry name" value="Kinesin"/>
    <property type="match status" value="1"/>
</dbReference>
<dbReference type="PRINTS" id="PR00380">
    <property type="entry name" value="KINESINHEAVY"/>
</dbReference>
<dbReference type="SMART" id="SM00129">
    <property type="entry name" value="KISc"/>
    <property type="match status" value="1"/>
</dbReference>
<dbReference type="SUPFAM" id="SSF52540">
    <property type="entry name" value="P-loop containing nucleoside triphosphate hydrolases"/>
    <property type="match status" value="1"/>
</dbReference>
<dbReference type="SUPFAM" id="SSF47781">
    <property type="entry name" value="RuvA domain 2-like"/>
    <property type="match status" value="1"/>
</dbReference>
<dbReference type="PROSITE" id="PS00411">
    <property type="entry name" value="KINESIN_MOTOR_1"/>
    <property type="match status" value="1"/>
</dbReference>
<dbReference type="PROSITE" id="PS50067">
    <property type="entry name" value="KINESIN_MOTOR_2"/>
    <property type="match status" value="1"/>
</dbReference>
<gene>
    <name type="primary">kif22</name>
    <name type="synonym">kid</name>
</gene>
<sequence length="639" mass="71391">MAKRVSILDQHKKPSSARVRVAVRLRPYMEKEDEKAPAACVRGLDSQSLEIVNWRNQLETMQYQFDAFYGDSATQREIYMGSVCHILPHLLIGQNASVFAYGPTGAGKTHTMLGNPSQPGVIPRAVRDLLQMTRTAAGGPENENWTYTITMSYVEIYQEKVMDLLEPKNKDLPIREDKDHNILIPGVTQKTINSFGDFDEHFIPASQNRTVASTKLNDRSSRSHAVLLIKVQKSQQVSPFRQLTGKLYLIDLAGSEDNRRTGNQGIRLKESGAINSSLFTLSKVVDALNQGLPRIPYRDSKLTRLLQDSLGGTAHSVMIANIAPEQKYYFDTLTALNFAAKSKQIINKPFSQETTQSIAALPAMKRPREEAETAAGSRQRKKSKTDSTESSPNTSMDAASKRKLNLAALDPAVVERLLKLDKILTEKGMKEAQLLSTPKRERMALLKKWEESQMEIERLKEKQKELEQKAIEAEARLEKSTNSDCNLSDSSVSECTFRAPLRGRNTSTAKAKKVLRVLPMQGNSQLQSTIEEGIPVFEKKKKKPVSCDGRENQPTWEVNVRTDLLESGRERILKLLNTGSVKELKSLQKIGDKKAKLIIGWREVNGPFKNVEDLASLEGISAKQVTSFIKANILSIIAS</sequence>
<feature type="chain" id="PRO_0000347240" description="Kinesin-like protein KIF22">
    <location>
        <begin position="1"/>
        <end position="639"/>
    </location>
</feature>
<feature type="domain" description="Kinesin motor" evidence="4">
    <location>
        <begin position="18"/>
        <end position="345"/>
    </location>
</feature>
<feature type="region of interest" description="Disordered" evidence="5">
    <location>
        <begin position="358"/>
        <end position="400"/>
    </location>
</feature>
<feature type="coiled-coil region" evidence="3">
    <location>
        <begin position="439"/>
        <end position="484"/>
    </location>
</feature>
<feature type="short sequence motif" description="Important for regulated proteolytic degradation" evidence="1">
    <location>
        <begin position="549"/>
        <end position="552"/>
    </location>
</feature>
<feature type="compositionally biased region" description="Polar residues" evidence="5">
    <location>
        <begin position="388"/>
        <end position="397"/>
    </location>
</feature>
<feature type="binding site" evidence="4">
    <location>
        <begin position="102"/>
        <end position="109"/>
    </location>
    <ligand>
        <name>ATP</name>
        <dbReference type="ChEBI" id="CHEBI:30616"/>
    </ligand>
</feature>
<name>KIF22_XENTR</name>
<accession>Q6P3R1</accession>
<keyword id="KW-0067">ATP-binding</keyword>
<keyword id="KW-0175">Coiled coil</keyword>
<keyword id="KW-0963">Cytoplasm</keyword>
<keyword id="KW-0206">Cytoskeleton</keyword>
<keyword id="KW-0238">DNA-binding</keyword>
<keyword id="KW-0493">Microtubule</keyword>
<keyword id="KW-0505">Motor protein</keyword>
<keyword id="KW-0547">Nucleotide-binding</keyword>
<keyword id="KW-0539">Nucleus</keyword>
<keyword id="KW-1185">Reference proteome</keyword>
<keyword id="KW-0832">Ubl conjugation</keyword>
<reference key="1">
    <citation type="submission" date="2003-12" db="EMBL/GenBank/DDBJ databases">
        <authorList>
            <consortium name="NIH - Xenopus Gene Collection (XGC) project"/>
        </authorList>
    </citation>
    <scope>NUCLEOTIDE SEQUENCE [LARGE SCALE MRNA]</scope>
    <source>
        <tissue>Embryo</tissue>
    </source>
</reference>
<organism>
    <name type="scientific">Xenopus tropicalis</name>
    <name type="common">Western clawed frog</name>
    <name type="synonym">Silurana tropicalis</name>
    <dbReference type="NCBI Taxonomy" id="8364"/>
    <lineage>
        <taxon>Eukaryota</taxon>
        <taxon>Metazoa</taxon>
        <taxon>Chordata</taxon>
        <taxon>Craniata</taxon>
        <taxon>Vertebrata</taxon>
        <taxon>Euteleostomi</taxon>
        <taxon>Amphibia</taxon>
        <taxon>Batrachia</taxon>
        <taxon>Anura</taxon>
        <taxon>Pipoidea</taxon>
        <taxon>Pipidae</taxon>
        <taxon>Xenopodinae</taxon>
        <taxon>Xenopus</taxon>
        <taxon>Silurana</taxon>
    </lineage>
</organism>
<proteinExistence type="evidence at transcript level"/>
<protein>
    <recommendedName>
        <fullName>Kinesin-like protein KIF22</fullName>
    </recommendedName>
    <alternativeName>
        <fullName>Chromokinesin kid</fullName>
    </alternativeName>
</protein>
<evidence type="ECO:0000250" key="1"/>
<evidence type="ECO:0000250" key="2">
    <source>
        <dbReference type="UniProtKB" id="Q9I869"/>
    </source>
</evidence>
<evidence type="ECO:0000255" key="3"/>
<evidence type="ECO:0000255" key="4">
    <source>
        <dbReference type="PROSITE-ProRule" id="PRU00283"/>
    </source>
</evidence>
<evidence type="ECO:0000256" key="5">
    <source>
        <dbReference type="SAM" id="MobiDB-lite"/>
    </source>
</evidence>
<evidence type="ECO:0000305" key="6"/>